<gene>
    <name type="primary">qmcA</name>
    <name type="ordered locus">SF0434</name>
    <name type="ordered locus">S0441</name>
</gene>
<keyword id="KW-0472">Membrane</keyword>
<keyword id="KW-1185">Reference proteome</keyword>
<keyword id="KW-0812">Transmembrane</keyword>
<keyword id="KW-1133">Transmembrane helix</keyword>
<organism>
    <name type="scientific">Shigella flexneri</name>
    <dbReference type="NCBI Taxonomy" id="623"/>
    <lineage>
        <taxon>Bacteria</taxon>
        <taxon>Pseudomonadati</taxon>
        <taxon>Pseudomonadota</taxon>
        <taxon>Gammaproteobacteria</taxon>
        <taxon>Enterobacterales</taxon>
        <taxon>Enterobacteriaceae</taxon>
        <taxon>Shigella</taxon>
    </lineage>
</organism>
<accession>P0AA56</accession>
<accession>P77367</accession>
<proteinExistence type="inferred from homology"/>
<sequence length="305" mass="33743">MLIFIPILIFVALVIVGAGVKIVPQGYQWTVERFGRYTKTLQPGLSLVVPFMDRIGRKINMMEQVLDIPSQEVISKDNANVTIDAVCFIQVIDAPRAAYEVSNLELAIINLTMTNIRTVLGSMELDEMLSQRDSINSRLLRIVDEATNPWGIKVTRIEIRDVRPPAELISSMNAQMKAERTKRAYILEAEGIRQAEILKAEGEKQSQILKAEGERQSAFLQAEARERSAEAEARATKMVSEAIASGDIQAVNYFVAQKYTEALQQIGSSSNSKVVMMPLEASSLMGSIAGIAELVKDSANKRTQP</sequence>
<evidence type="ECO:0000255" key="1"/>
<evidence type="ECO:0000305" key="2"/>
<dbReference type="EMBL" id="AE005674">
    <property type="protein sequence ID" value="AAN42089.1"/>
    <property type="molecule type" value="Genomic_DNA"/>
</dbReference>
<dbReference type="EMBL" id="AE014073">
    <property type="protein sequence ID" value="AAP15966.1"/>
    <property type="molecule type" value="Genomic_DNA"/>
</dbReference>
<dbReference type="RefSeq" id="WP_000904502.1">
    <property type="nucleotide sequence ID" value="NZ_WPGW01000015.1"/>
</dbReference>
<dbReference type="SMR" id="P0AA56"/>
<dbReference type="STRING" id="198214.SF0434"/>
<dbReference type="PaxDb" id="198214-SF0434"/>
<dbReference type="KEGG" id="sfl:SF0434"/>
<dbReference type="KEGG" id="sfx:S0441"/>
<dbReference type="PATRIC" id="fig|198214.7.peg.496"/>
<dbReference type="HOGENOM" id="CLU_024949_2_2_6"/>
<dbReference type="Proteomes" id="UP000001006">
    <property type="component" value="Chromosome"/>
</dbReference>
<dbReference type="Proteomes" id="UP000002673">
    <property type="component" value="Chromosome"/>
</dbReference>
<dbReference type="GO" id="GO:0016020">
    <property type="term" value="C:membrane"/>
    <property type="evidence" value="ECO:0007669"/>
    <property type="project" value="UniProtKB-SubCell"/>
</dbReference>
<dbReference type="CDD" id="cd08829">
    <property type="entry name" value="SPFH_paraslipin"/>
    <property type="match status" value="1"/>
</dbReference>
<dbReference type="FunFam" id="3.30.479.30:FF:000006">
    <property type="entry name" value="SPFH/Band 7/PHB domain protein"/>
    <property type="match status" value="1"/>
</dbReference>
<dbReference type="Gene3D" id="3.30.479.30">
    <property type="entry name" value="Band 7 domain"/>
    <property type="match status" value="1"/>
</dbReference>
<dbReference type="InterPro" id="IPR050710">
    <property type="entry name" value="Band7/mec-2_domain"/>
</dbReference>
<dbReference type="InterPro" id="IPR001107">
    <property type="entry name" value="Band_7"/>
</dbReference>
<dbReference type="InterPro" id="IPR036013">
    <property type="entry name" value="Band_7/SPFH_dom_sf"/>
</dbReference>
<dbReference type="InterPro" id="IPR018080">
    <property type="entry name" value="Band_7/stomatin-like_CS"/>
</dbReference>
<dbReference type="InterPro" id="IPR001972">
    <property type="entry name" value="Stomatin_HflK_fam"/>
</dbReference>
<dbReference type="PANTHER" id="PTHR43327">
    <property type="entry name" value="STOMATIN-LIKE PROTEIN 2, MITOCHONDRIAL"/>
    <property type="match status" value="1"/>
</dbReference>
<dbReference type="PANTHER" id="PTHR43327:SF10">
    <property type="entry name" value="STOMATIN-LIKE PROTEIN 2, MITOCHONDRIAL"/>
    <property type="match status" value="1"/>
</dbReference>
<dbReference type="Pfam" id="PF01145">
    <property type="entry name" value="Band_7"/>
    <property type="match status" value="1"/>
</dbReference>
<dbReference type="PRINTS" id="PR00721">
    <property type="entry name" value="STOMATIN"/>
</dbReference>
<dbReference type="SMART" id="SM00244">
    <property type="entry name" value="PHB"/>
    <property type="match status" value="1"/>
</dbReference>
<dbReference type="SUPFAM" id="SSF117892">
    <property type="entry name" value="Band 7/SPFH domain"/>
    <property type="match status" value="1"/>
</dbReference>
<dbReference type="PROSITE" id="PS01270">
    <property type="entry name" value="BAND_7"/>
    <property type="match status" value="1"/>
</dbReference>
<comment type="subcellular location">
    <subcellularLocation>
        <location evidence="2">Membrane</location>
        <topology evidence="2">Single-pass membrane protein</topology>
    </subcellularLocation>
</comment>
<comment type="similarity">
    <text evidence="2">Belongs to the band 7/mec-2 family.</text>
</comment>
<feature type="chain" id="PRO_0000094059" description="Protein QmcA">
    <location>
        <begin position="1"/>
        <end position="305"/>
    </location>
</feature>
<feature type="transmembrane region" description="Helical" evidence="1">
    <location>
        <begin position="3"/>
        <end position="23"/>
    </location>
</feature>
<name>QMCA_SHIFL</name>
<reference key="1">
    <citation type="journal article" date="2002" name="Nucleic Acids Res.">
        <title>Genome sequence of Shigella flexneri 2a: insights into pathogenicity through comparison with genomes of Escherichia coli K12 and O157.</title>
        <authorList>
            <person name="Jin Q."/>
            <person name="Yuan Z."/>
            <person name="Xu J."/>
            <person name="Wang Y."/>
            <person name="Shen Y."/>
            <person name="Lu W."/>
            <person name="Wang J."/>
            <person name="Liu H."/>
            <person name="Yang J."/>
            <person name="Yang F."/>
            <person name="Zhang X."/>
            <person name="Zhang J."/>
            <person name="Yang G."/>
            <person name="Wu H."/>
            <person name="Qu D."/>
            <person name="Dong J."/>
            <person name="Sun L."/>
            <person name="Xue Y."/>
            <person name="Zhao A."/>
            <person name="Gao Y."/>
            <person name="Zhu J."/>
            <person name="Kan B."/>
            <person name="Ding K."/>
            <person name="Chen S."/>
            <person name="Cheng H."/>
            <person name="Yao Z."/>
            <person name="He B."/>
            <person name="Chen R."/>
            <person name="Ma D."/>
            <person name="Qiang B."/>
            <person name="Wen Y."/>
            <person name="Hou Y."/>
            <person name="Yu J."/>
        </authorList>
    </citation>
    <scope>NUCLEOTIDE SEQUENCE [LARGE SCALE GENOMIC DNA]</scope>
    <source>
        <strain>301 / Serotype 2a</strain>
    </source>
</reference>
<reference key="2">
    <citation type="journal article" date="2003" name="Infect. Immun.">
        <title>Complete genome sequence and comparative genomics of Shigella flexneri serotype 2a strain 2457T.</title>
        <authorList>
            <person name="Wei J."/>
            <person name="Goldberg M.B."/>
            <person name="Burland V."/>
            <person name="Venkatesan M.M."/>
            <person name="Deng W."/>
            <person name="Fournier G."/>
            <person name="Mayhew G.F."/>
            <person name="Plunkett G. III"/>
            <person name="Rose D.J."/>
            <person name="Darling A."/>
            <person name="Mau B."/>
            <person name="Perna N.T."/>
            <person name="Payne S.M."/>
            <person name="Runyen-Janecky L.J."/>
            <person name="Zhou S."/>
            <person name="Schwartz D.C."/>
            <person name="Blattner F.R."/>
        </authorList>
    </citation>
    <scope>NUCLEOTIDE SEQUENCE [LARGE SCALE GENOMIC DNA]</scope>
    <source>
        <strain>ATCC 700930 / 2457T / Serotype 2a</strain>
    </source>
</reference>
<protein>
    <recommendedName>
        <fullName>Protein QmcA</fullName>
    </recommendedName>
</protein>